<accession>B2K633</accession>
<name>MTNA_YERPB</name>
<evidence type="ECO:0000255" key="1">
    <source>
        <dbReference type="HAMAP-Rule" id="MF_01678"/>
    </source>
</evidence>
<evidence type="ECO:0000305" key="2"/>
<reference key="1">
    <citation type="submission" date="2008-04" db="EMBL/GenBank/DDBJ databases">
        <title>Complete sequence of Yersinia pseudotuberculosis PB1/+.</title>
        <authorList>
            <person name="Copeland A."/>
            <person name="Lucas S."/>
            <person name="Lapidus A."/>
            <person name="Glavina del Rio T."/>
            <person name="Dalin E."/>
            <person name="Tice H."/>
            <person name="Bruce D."/>
            <person name="Goodwin L."/>
            <person name="Pitluck S."/>
            <person name="Munk A.C."/>
            <person name="Brettin T."/>
            <person name="Detter J.C."/>
            <person name="Han C."/>
            <person name="Tapia R."/>
            <person name="Schmutz J."/>
            <person name="Larimer F."/>
            <person name="Land M."/>
            <person name="Hauser L."/>
            <person name="Challacombe J.F."/>
            <person name="Green L."/>
            <person name="Lindler L.E."/>
            <person name="Nikolich M.P."/>
            <person name="Richardson P."/>
        </authorList>
    </citation>
    <scope>NUCLEOTIDE SEQUENCE [LARGE SCALE GENOMIC DNA]</scope>
    <source>
        <strain>PB1/+</strain>
    </source>
</reference>
<feature type="chain" id="PRO_0000357281" description="Methylthioribose-1-phosphate isomerase">
    <location>
        <begin position="1"/>
        <end position="346"/>
    </location>
</feature>
<feature type="active site" description="Proton donor" evidence="1">
    <location>
        <position position="233"/>
    </location>
</feature>
<feature type="binding site" evidence="1">
    <location>
        <begin position="54"/>
        <end position="56"/>
    </location>
    <ligand>
        <name>substrate</name>
    </ligand>
</feature>
<feature type="binding site" evidence="1">
    <location>
        <position position="91"/>
    </location>
    <ligand>
        <name>substrate</name>
    </ligand>
</feature>
<feature type="binding site" evidence="1">
    <location>
        <position position="192"/>
    </location>
    <ligand>
        <name>substrate</name>
    </ligand>
</feature>
<feature type="binding site" evidence="1">
    <location>
        <begin position="243"/>
        <end position="244"/>
    </location>
    <ligand>
        <name>substrate</name>
    </ligand>
</feature>
<feature type="site" description="Transition state stabilizer" evidence="1">
    <location>
        <position position="153"/>
    </location>
</feature>
<keyword id="KW-0028">Amino-acid biosynthesis</keyword>
<keyword id="KW-0413">Isomerase</keyword>
<keyword id="KW-0486">Methionine biosynthesis</keyword>
<protein>
    <recommendedName>
        <fullName evidence="1">Methylthioribose-1-phosphate isomerase</fullName>
        <shortName evidence="1">M1Pi</shortName>
        <shortName evidence="1">MTR-1-P isomerase</shortName>
        <ecNumber evidence="1">5.3.1.23</ecNumber>
    </recommendedName>
    <alternativeName>
        <fullName evidence="1">S-methyl-5-thioribose-1-phosphate isomerase</fullName>
    </alternativeName>
</protein>
<comment type="function">
    <text evidence="1">Catalyzes the interconversion of methylthioribose-1-phosphate (MTR-1-P) into methylthioribulose-1-phosphate (MTRu-1-P).</text>
</comment>
<comment type="catalytic activity">
    <reaction evidence="1">
        <text>5-(methylsulfanyl)-alpha-D-ribose 1-phosphate = 5-(methylsulfanyl)-D-ribulose 1-phosphate</text>
        <dbReference type="Rhea" id="RHEA:19989"/>
        <dbReference type="ChEBI" id="CHEBI:58533"/>
        <dbReference type="ChEBI" id="CHEBI:58548"/>
        <dbReference type="EC" id="5.3.1.23"/>
    </reaction>
</comment>
<comment type="pathway">
    <text evidence="1">Amino-acid biosynthesis; L-methionine biosynthesis via salvage pathway; L-methionine from S-methyl-5-thio-alpha-D-ribose 1-phosphate: step 1/6.</text>
</comment>
<comment type="similarity">
    <text evidence="2">Belongs to the eIF-2B alpha/beta/delta subunits family. MtnA subfamily.</text>
</comment>
<sequence>MQTLNTLDLQTTSLKIVNGQLWILDQQALPQRQEWLLADTVASLIEHIQALRVRGAPLIGLSASLLLALLAERGLSQALLEQALIALRESRPTAVNLMNNLARMQQALLQPNWVTAMAAEALRLVDEDRELCERIAQHGAALVKPGSNLLTHCNTGGLATAGIGTAIGVLLRAHQQGNLRQVWVDETRPLLQGGRLTAWELGELGIPYQLICDSMAASLMAHGQVDAIWVGADRIAANGDVANKIGTYSLAVLAHYHRIPFYVAAPHTTHDPDCPDGAAIPIEQRAASEVTGVSGGFGHCQWAPKDTAVYNPAFDVTPAALISGWVLDSGVITPEQVAAGFFQPHR</sequence>
<dbReference type="EC" id="5.3.1.23" evidence="1"/>
<dbReference type="EMBL" id="CP001048">
    <property type="protein sequence ID" value="ACC87899.1"/>
    <property type="molecule type" value="Genomic_DNA"/>
</dbReference>
<dbReference type="RefSeq" id="WP_011191834.1">
    <property type="nucleotide sequence ID" value="NZ_CP009780.1"/>
</dbReference>
<dbReference type="SMR" id="B2K633"/>
<dbReference type="GeneID" id="49787069"/>
<dbReference type="KEGG" id="ypb:YPTS_0918"/>
<dbReference type="PATRIC" id="fig|502801.10.peg.251"/>
<dbReference type="UniPathway" id="UPA00904">
    <property type="reaction ID" value="UER00874"/>
</dbReference>
<dbReference type="GO" id="GO:0046523">
    <property type="term" value="F:S-methyl-5-thioribose-1-phosphate isomerase activity"/>
    <property type="evidence" value="ECO:0007669"/>
    <property type="project" value="UniProtKB-UniRule"/>
</dbReference>
<dbReference type="GO" id="GO:0019509">
    <property type="term" value="P:L-methionine salvage from methylthioadenosine"/>
    <property type="evidence" value="ECO:0007669"/>
    <property type="project" value="UniProtKB-UniRule"/>
</dbReference>
<dbReference type="FunFam" id="3.40.50.10470:FF:000006">
    <property type="entry name" value="Methylthioribose-1-phosphate isomerase"/>
    <property type="match status" value="1"/>
</dbReference>
<dbReference type="Gene3D" id="1.20.120.420">
    <property type="entry name" value="translation initiation factor eif-2b, domain 1"/>
    <property type="match status" value="1"/>
</dbReference>
<dbReference type="Gene3D" id="3.40.50.10470">
    <property type="entry name" value="Translation initiation factor eif-2b, domain 2"/>
    <property type="match status" value="1"/>
</dbReference>
<dbReference type="HAMAP" id="MF_01678">
    <property type="entry name" value="Salvage_MtnA"/>
    <property type="match status" value="1"/>
</dbReference>
<dbReference type="InterPro" id="IPR000649">
    <property type="entry name" value="IF-2B-related"/>
</dbReference>
<dbReference type="InterPro" id="IPR005251">
    <property type="entry name" value="IF-M1Pi"/>
</dbReference>
<dbReference type="InterPro" id="IPR042529">
    <property type="entry name" value="IF_2B-like_C"/>
</dbReference>
<dbReference type="InterPro" id="IPR011559">
    <property type="entry name" value="Initiation_fac_2B_a/b/d"/>
</dbReference>
<dbReference type="InterPro" id="IPR027363">
    <property type="entry name" value="M1Pi_N"/>
</dbReference>
<dbReference type="InterPro" id="IPR037171">
    <property type="entry name" value="NagB/RpiA_transferase-like"/>
</dbReference>
<dbReference type="NCBIfam" id="TIGR00524">
    <property type="entry name" value="eIF-2B_rel"/>
    <property type="match status" value="1"/>
</dbReference>
<dbReference type="NCBIfam" id="NF004326">
    <property type="entry name" value="PRK05720.1"/>
    <property type="match status" value="1"/>
</dbReference>
<dbReference type="NCBIfam" id="TIGR00512">
    <property type="entry name" value="salvage_mtnA"/>
    <property type="match status" value="1"/>
</dbReference>
<dbReference type="PANTHER" id="PTHR43475">
    <property type="entry name" value="METHYLTHIORIBOSE-1-PHOSPHATE ISOMERASE"/>
    <property type="match status" value="1"/>
</dbReference>
<dbReference type="PANTHER" id="PTHR43475:SF1">
    <property type="entry name" value="METHYLTHIORIBOSE-1-PHOSPHATE ISOMERASE"/>
    <property type="match status" value="1"/>
</dbReference>
<dbReference type="Pfam" id="PF01008">
    <property type="entry name" value="IF-2B"/>
    <property type="match status" value="1"/>
</dbReference>
<dbReference type="SUPFAM" id="SSF100950">
    <property type="entry name" value="NagB/RpiA/CoA transferase-like"/>
    <property type="match status" value="1"/>
</dbReference>
<proteinExistence type="inferred from homology"/>
<organism>
    <name type="scientific">Yersinia pseudotuberculosis serotype IB (strain PB1/+)</name>
    <dbReference type="NCBI Taxonomy" id="502801"/>
    <lineage>
        <taxon>Bacteria</taxon>
        <taxon>Pseudomonadati</taxon>
        <taxon>Pseudomonadota</taxon>
        <taxon>Gammaproteobacteria</taxon>
        <taxon>Enterobacterales</taxon>
        <taxon>Yersiniaceae</taxon>
        <taxon>Yersinia</taxon>
    </lineage>
</organism>
<gene>
    <name evidence="1" type="primary">mtnA</name>
    <name type="ordered locus">YPTS_0918</name>
</gene>